<keyword id="KW-0687">Ribonucleoprotein</keyword>
<keyword id="KW-0689">Ribosomal protein</keyword>
<gene>
    <name evidence="1" type="primary">rpmA</name>
    <name type="ordered locus">MAV_1730</name>
</gene>
<evidence type="ECO:0000255" key="1">
    <source>
        <dbReference type="HAMAP-Rule" id="MF_00539"/>
    </source>
</evidence>
<evidence type="ECO:0000256" key="2">
    <source>
        <dbReference type="SAM" id="MobiDB-lite"/>
    </source>
</evidence>
<evidence type="ECO:0000305" key="3"/>
<accession>A0QDG9</accession>
<name>RL27_MYCA1</name>
<dbReference type="EMBL" id="CP000479">
    <property type="protein sequence ID" value="ABK67875.1"/>
    <property type="molecule type" value="Genomic_DNA"/>
</dbReference>
<dbReference type="RefSeq" id="WP_003875863.1">
    <property type="nucleotide sequence ID" value="NC_008595.1"/>
</dbReference>
<dbReference type="SMR" id="A0QDG9"/>
<dbReference type="GeneID" id="75269505"/>
<dbReference type="KEGG" id="mav:MAV_1730"/>
<dbReference type="HOGENOM" id="CLU_095424_4_0_11"/>
<dbReference type="Proteomes" id="UP000001574">
    <property type="component" value="Chromosome"/>
</dbReference>
<dbReference type="GO" id="GO:0022625">
    <property type="term" value="C:cytosolic large ribosomal subunit"/>
    <property type="evidence" value="ECO:0007669"/>
    <property type="project" value="TreeGrafter"/>
</dbReference>
<dbReference type="GO" id="GO:0003735">
    <property type="term" value="F:structural constituent of ribosome"/>
    <property type="evidence" value="ECO:0007669"/>
    <property type="project" value="InterPro"/>
</dbReference>
<dbReference type="GO" id="GO:0006412">
    <property type="term" value="P:translation"/>
    <property type="evidence" value="ECO:0007669"/>
    <property type="project" value="UniProtKB-UniRule"/>
</dbReference>
<dbReference type="FunFam" id="2.40.50.100:FF:000020">
    <property type="entry name" value="50S ribosomal protein L27"/>
    <property type="match status" value="1"/>
</dbReference>
<dbReference type="Gene3D" id="2.40.50.100">
    <property type="match status" value="1"/>
</dbReference>
<dbReference type="HAMAP" id="MF_00539">
    <property type="entry name" value="Ribosomal_bL27"/>
    <property type="match status" value="1"/>
</dbReference>
<dbReference type="InterPro" id="IPR001684">
    <property type="entry name" value="Ribosomal_bL27"/>
</dbReference>
<dbReference type="InterPro" id="IPR018261">
    <property type="entry name" value="Ribosomal_bL27_CS"/>
</dbReference>
<dbReference type="NCBIfam" id="TIGR00062">
    <property type="entry name" value="L27"/>
    <property type="match status" value="1"/>
</dbReference>
<dbReference type="PANTHER" id="PTHR15893:SF0">
    <property type="entry name" value="LARGE RIBOSOMAL SUBUNIT PROTEIN BL27M"/>
    <property type="match status" value="1"/>
</dbReference>
<dbReference type="PANTHER" id="PTHR15893">
    <property type="entry name" value="RIBOSOMAL PROTEIN L27"/>
    <property type="match status" value="1"/>
</dbReference>
<dbReference type="Pfam" id="PF01016">
    <property type="entry name" value="Ribosomal_L27"/>
    <property type="match status" value="1"/>
</dbReference>
<dbReference type="PRINTS" id="PR00063">
    <property type="entry name" value="RIBOSOMALL27"/>
</dbReference>
<dbReference type="SUPFAM" id="SSF110324">
    <property type="entry name" value="Ribosomal L27 protein-like"/>
    <property type="match status" value="1"/>
</dbReference>
<dbReference type="PROSITE" id="PS00831">
    <property type="entry name" value="RIBOSOMAL_L27"/>
    <property type="match status" value="1"/>
</dbReference>
<feature type="chain" id="PRO_1000017516" description="Large ribosomal subunit protein bL27">
    <location>
        <begin position="1"/>
        <end position="88"/>
    </location>
</feature>
<feature type="region of interest" description="Disordered" evidence="2">
    <location>
        <begin position="1"/>
        <end position="21"/>
    </location>
</feature>
<organism>
    <name type="scientific">Mycobacterium avium (strain 104)</name>
    <dbReference type="NCBI Taxonomy" id="243243"/>
    <lineage>
        <taxon>Bacteria</taxon>
        <taxon>Bacillati</taxon>
        <taxon>Actinomycetota</taxon>
        <taxon>Actinomycetes</taxon>
        <taxon>Mycobacteriales</taxon>
        <taxon>Mycobacteriaceae</taxon>
        <taxon>Mycobacterium</taxon>
        <taxon>Mycobacterium avium complex (MAC)</taxon>
    </lineage>
</organism>
<protein>
    <recommendedName>
        <fullName evidence="1">Large ribosomal subunit protein bL27</fullName>
    </recommendedName>
    <alternativeName>
        <fullName evidence="3">50S ribosomal protein L27</fullName>
    </alternativeName>
</protein>
<comment type="similarity">
    <text evidence="1">Belongs to the bacterial ribosomal protein bL27 family.</text>
</comment>
<sequence length="88" mass="9132">MAHKKGASSSRNGRDSAAQRLGVKRFGGQIVKAGEIIVRQRGTKFHPGTGVGRGGDDTLFAKQAGAVEFGIKRGRKTVNIVAAGQAAD</sequence>
<proteinExistence type="inferred from homology"/>
<reference key="1">
    <citation type="submission" date="2006-10" db="EMBL/GenBank/DDBJ databases">
        <authorList>
            <person name="Fleischmann R.D."/>
            <person name="Dodson R.J."/>
            <person name="Haft D.H."/>
            <person name="Merkel J.S."/>
            <person name="Nelson W.C."/>
            <person name="Fraser C.M."/>
        </authorList>
    </citation>
    <scope>NUCLEOTIDE SEQUENCE [LARGE SCALE GENOMIC DNA]</scope>
    <source>
        <strain>104</strain>
    </source>
</reference>